<keyword id="KW-0533">Nickel</keyword>
<keyword id="KW-1185">Reference proteome</keyword>
<accession>C6BXJ6</accession>
<feature type="chain" id="PRO_1000213479" description="Putative nickel insertion protein">
    <location>
        <begin position="1"/>
        <end position="417"/>
    </location>
</feature>
<feature type="region of interest" description="Disordered" evidence="2">
    <location>
        <begin position="69"/>
        <end position="99"/>
    </location>
</feature>
<feature type="compositionally biased region" description="Basic residues" evidence="2">
    <location>
        <begin position="74"/>
        <end position="99"/>
    </location>
</feature>
<reference key="1">
    <citation type="submission" date="2009-06" db="EMBL/GenBank/DDBJ databases">
        <title>Complete sequence of Desulfovibrio salexigens DSM 2638.</title>
        <authorList>
            <consortium name="US DOE Joint Genome Institute"/>
            <person name="Lucas S."/>
            <person name="Copeland A."/>
            <person name="Lapidus A."/>
            <person name="Glavina del Rio T."/>
            <person name="Tice H."/>
            <person name="Bruce D."/>
            <person name="Goodwin L."/>
            <person name="Pitluck S."/>
            <person name="Munk A.C."/>
            <person name="Brettin T."/>
            <person name="Detter J.C."/>
            <person name="Han C."/>
            <person name="Tapia R."/>
            <person name="Larimer F."/>
            <person name="Land M."/>
            <person name="Hauser L."/>
            <person name="Kyrpides N."/>
            <person name="Anderson I."/>
            <person name="Wall J.D."/>
            <person name="Arkin A.P."/>
            <person name="Dehal P."/>
            <person name="Chivian D."/>
            <person name="Giles B."/>
            <person name="Hazen T.C."/>
        </authorList>
    </citation>
    <scope>NUCLEOTIDE SEQUENCE [LARGE SCALE GENOMIC DNA]</scope>
    <source>
        <strain>ATCC 14822 / DSM 2638 / NCIMB 8403 / VKM B-1763</strain>
    </source>
</reference>
<name>Y487_MARSD</name>
<sequence length="417" mass="46017">MNILYYDCFSGISGDMNLAAMIDLGVSPDFLITELAKLGMEDEFSLKISQDSRKGIFGTRVDVELAHQHEHHHDHGHHHHGHGHHHDHTHDHHHHHEHRNLKDIEELINSSDLNDKVKATSLAIFKRVAKAEAKIHGSTIYEVHFHEVGATDSIVDIVGAAICFHELEIDQVWCSSIELGGGFVNCAHGKMPVPAPATSEILAGLPTTQGAVQQETTTPTGAAILAEFINNFSDSPRMTVLKTAYGIGHRDNEIPNVLRVQLANIEQQVSSLPTVPSRLLQCNIDDMTGEMLGAALDQLMEDGAMDVHFTSIVMKKNRPATTLSLLCSAEDEDKFKRLIFKHTSTLGIKSIAIEKTVLDISFDKLETPLGTVTMKNAILDGEVIRSKPELEDCRALAKQHGIPLSEVYLQIGKVREI</sequence>
<gene>
    <name type="ordered locus">Desal_0487</name>
</gene>
<dbReference type="EMBL" id="CP001649">
    <property type="protein sequence ID" value="ACS78554.1"/>
    <property type="molecule type" value="Genomic_DNA"/>
</dbReference>
<dbReference type="RefSeq" id="WP_015850373.1">
    <property type="nucleotide sequence ID" value="NC_012881.1"/>
</dbReference>
<dbReference type="SMR" id="C6BXJ6"/>
<dbReference type="STRING" id="526222.Desal_0487"/>
<dbReference type="KEGG" id="dsa:Desal_0487"/>
<dbReference type="eggNOG" id="COG1641">
    <property type="taxonomic scope" value="Bacteria"/>
</dbReference>
<dbReference type="HOGENOM" id="CLU_028523_2_1_7"/>
<dbReference type="OrthoDB" id="9765625at2"/>
<dbReference type="Proteomes" id="UP000002601">
    <property type="component" value="Chromosome"/>
</dbReference>
<dbReference type="GO" id="GO:0016829">
    <property type="term" value="F:lyase activity"/>
    <property type="evidence" value="ECO:0007669"/>
    <property type="project" value="UniProtKB-UniRule"/>
</dbReference>
<dbReference type="GO" id="GO:0016151">
    <property type="term" value="F:nickel cation binding"/>
    <property type="evidence" value="ECO:0007669"/>
    <property type="project" value="UniProtKB-UniRule"/>
</dbReference>
<dbReference type="Gene3D" id="3.10.20.300">
    <property type="entry name" value="mk0293 like domain"/>
    <property type="match status" value="1"/>
</dbReference>
<dbReference type="Gene3D" id="3.30.70.1380">
    <property type="entry name" value="Transcriptional regulatory protein pf0864 domain like"/>
    <property type="match status" value="1"/>
</dbReference>
<dbReference type="HAMAP" id="MF_01074">
    <property type="entry name" value="LarC"/>
    <property type="match status" value="1"/>
</dbReference>
<dbReference type="InterPro" id="IPR002822">
    <property type="entry name" value="Ni_insertion"/>
</dbReference>
<dbReference type="NCBIfam" id="TIGR00299">
    <property type="entry name" value="nickel pincer cofactor biosynthesis protein LarC"/>
    <property type="match status" value="1"/>
</dbReference>
<dbReference type="PANTHER" id="PTHR36566">
    <property type="entry name" value="NICKEL INSERTION PROTEIN-RELATED"/>
    <property type="match status" value="1"/>
</dbReference>
<dbReference type="PANTHER" id="PTHR36566:SF1">
    <property type="entry name" value="PYRIDINIUM-3,5-BISTHIOCARBOXYLIC ACID MONONUCLEOTIDE NICKEL INSERTION PROTEIN"/>
    <property type="match status" value="1"/>
</dbReference>
<dbReference type="Pfam" id="PF01969">
    <property type="entry name" value="Ni_insertion"/>
    <property type="match status" value="1"/>
</dbReference>
<comment type="similarity">
    <text evidence="1">Belongs to the LarC family.</text>
</comment>
<evidence type="ECO:0000255" key="1">
    <source>
        <dbReference type="HAMAP-Rule" id="MF_01074"/>
    </source>
</evidence>
<evidence type="ECO:0000256" key="2">
    <source>
        <dbReference type="SAM" id="MobiDB-lite"/>
    </source>
</evidence>
<proteinExistence type="inferred from homology"/>
<protein>
    <recommendedName>
        <fullName evidence="1">Putative nickel insertion protein</fullName>
    </recommendedName>
</protein>
<organism>
    <name type="scientific">Maridesulfovibrio salexigens (strain ATCC 14822 / DSM 2638 / NCIMB 8403 / VKM B-1763)</name>
    <name type="common">Desulfovibrio salexigens</name>
    <dbReference type="NCBI Taxonomy" id="526222"/>
    <lineage>
        <taxon>Bacteria</taxon>
        <taxon>Pseudomonadati</taxon>
        <taxon>Thermodesulfobacteriota</taxon>
        <taxon>Desulfovibrionia</taxon>
        <taxon>Desulfovibrionales</taxon>
        <taxon>Desulfovibrionaceae</taxon>
        <taxon>Maridesulfovibrio</taxon>
    </lineage>
</organism>